<accession>Q497M3</accession>
<reference key="1">
    <citation type="journal article" date="2005" name="Science">
        <title>The transcriptional landscape of the mammalian genome.</title>
        <authorList>
            <person name="Carninci P."/>
            <person name="Kasukawa T."/>
            <person name="Katayama S."/>
            <person name="Gough J."/>
            <person name="Frith M.C."/>
            <person name="Maeda N."/>
            <person name="Oyama R."/>
            <person name="Ravasi T."/>
            <person name="Lenhard B."/>
            <person name="Wells C."/>
            <person name="Kodzius R."/>
            <person name="Shimokawa K."/>
            <person name="Bajic V.B."/>
            <person name="Brenner S.E."/>
            <person name="Batalov S."/>
            <person name="Forrest A.R."/>
            <person name="Zavolan M."/>
            <person name="Davis M.J."/>
            <person name="Wilming L.G."/>
            <person name="Aidinis V."/>
            <person name="Allen J.E."/>
            <person name="Ambesi-Impiombato A."/>
            <person name="Apweiler R."/>
            <person name="Aturaliya R.N."/>
            <person name="Bailey T.L."/>
            <person name="Bansal M."/>
            <person name="Baxter L."/>
            <person name="Beisel K.W."/>
            <person name="Bersano T."/>
            <person name="Bono H."/>
            <person name="Chalk A.M."/>
            <person name="Chiu K.P."/>
            <person name="Choudhary V."/>
            <person name="Christoffels A."/>
            <person name="Clutterbuck D.R."/>
            <person name="Crowe M.L."/>
            <person name="Dalla E."/>
            <person name="Dalrymple B.P."/>
            <person name="de Bono B."/>
            <person name="Della Gatta G."/>
            <person name="di Bernardo D."/>
            <person name="Down T."/>
            <person name="Engstrom P."/>
            <person name="Fagiolini M."/>
            <person name="Faulkner G."/>
            <person name="Fletcher C.F."/>
            <person name="Fukushima T."/>
            <person name="Furuno M."/>
            <person name="Futaki S."/>
            <person name="Gariboldi M."/>
            <person name="Georgii-Hemming P."/>
            <person name="Gingeras T.R."/>
            <person name="Gojobori T."/>
            <person name="Green R.E."/>
            <person name="Gustincich S."/>
            <person name="Harbers M."/>
            <person name="Hayashi Y."/>
            <person name="Hensch T.K."/>
            <person name="Hirokawa N."/>
            <person name="Hill D."/>
            <person name="Huminiecki L."/>
            <person name="Iacono M."/>
            <person name="Ikeo K."/>
            <person name="Iwama A."/>
            <person name="Ishikawa T."/>
            <person name="Jakt M."/>
            <person name="Kanapin A."/>
            <person name="Katoh M."/>
            <person name="Kawasawa Y."/>
            <person name="Kelso J."/>
            <person name="Kitamura H."/>
            <person name="Kitano H."/>
            <person name="Kollias G."/>
            <person name="Krishnan S.P."/>
            <person name="Kruger A."/>
            <person name="Kummerfeld S.K."/>
            <person name="Kurochkin I.V."/>
            <person name="Lareau L.F."/>
            <person name="Lazarevic D."/>
            <person name="Lipovich L."/>
            <person name="Liu J."/>
            <person name="Liuni S."/>
            <person name="McWilliam S."/>
            <person name="Madan Babu M."/>
            <person name="Madera M."/>
            <person name="Marchionni L."/>
            <person name="Matsuda H."/>
            <person name="Matsuzawa S."/>
            <person name="Miki H."/>
            <person name="Mignone F."/>
            <person name="Miyake S."/>
            <person name="Morris K."/>
            <person name="Mottagui-Tabar S."/>
            <person name="Mulder N."/>
            <person name="Nakano N."/>
            <person name="Nakauchi H."/>
            <person name="Ng P."/>
            <person name="Nilsson R."/>
            <person name="Nishiguchi S."/>
            <person name="Nishikawa S."/>
            <person name="Nori F."/>
            <person name="Ohara O."/>
            <person name="Okazaki Y."/>
            <person name="Orlando V."/>
            <person name="Pang K.C."/>
            <person name="Pavan W.J."/>
            <person name="Pavesi G."/>
            <person name="Pesole G."/>
            <person name="Petrovsky N."/>
            <person name="Piazza S."/>
            <person name="Reed J."/>
            <person name="Reid J.F."/>
            <person name="Ring B.Z."/>
            <person name="Ringwald M."/>
            <person name="Rost B."/>
            <person name="Ruan Y."/>
            <person name="Salzberg S.L."/>
            <person name="Sandelin A."/>
            <person name="Schneider C."/>
            <person name="Schoenbach C."/>
            <person name="Sekiguchi K."/>
            <person name="Semple C.A."/>
            <person name="Seno S."/>
            <person name="Sessa L."/>
            <person name="Sheng Y."/>
            <person name="Shibata Y."/>
            <person name="Shimada H."/>
            <person name="Shimada K."/>
            <person name="Silva D."/>
            <person name="Sinclair B."/>
            <person name="Sperling S."/>
            <person name="Stupka E."/>
            <person name="Sugiura K."/>
            <person name="Sultana R."/>
            <person name="Takenaka Y."/>
            <person name="Taki K."/>
            <person name="Tammoja K."/>
            <person name="Tan S.L."/>
            <person name="Tang S."/>
            <person name="Taylor M.S."/>
            <person name="Tegner J."/>
            <person name="Teichmann S.A."/>
            <person name="Ueda H.R."/>
            <person name="van Nimwegen E."/>
            <person name="Verardo R."/>
            <person name="Wei C.L."/>
            <person name="Yagi K."/>
            <person name="Yamanishi H."/>
            <person name="Zabarovsky E."/>
            <person name="Zhu S."/>
            <person name="Zimmer A."/>
            <person name="Hide W."/>
            <person name="Bult C."/>
            <person name="Grimmond S.M."/>
            <person name="Teasdale R.D."/>
            <person name="Liu E.T."/>
            <person name="Brusic V."/>
            <person name="Quackenbush J."/>
            <person name="Wahlestedt C."/>
            <person name="Mattick J.S."/>
            <person name="Hume D.A."/>
            <person name="Kai C."/>
            <person name="Sasaki D."/>
            <person name="Tomaru Y."/>
            <person name="Fukuda S."/>
            <person name="Kanamori-Katayama M."/>
            <person name="Suzuki M."/>
            <person name="Aoki J."/>
            <person name="Arakawa T."/>
            <person name="Iida J."/>
            <person name="Imamura K."/>
            <person name="Itoh M."/>
            <person name="Kato T."/>
            <person name="Kawaji H."/>
            <person name="Kawagashira N."/>
            <person name="Kawashima T."/>
            <person name="Kojima M."/>
            <person name="Kondo S."/>
            <person name="Konno H."/>
            <person name="Nakano K."/>
            <person name="Ninomiya N."/>
            <person name="Nishio T."/>
            <person name="Okada M."/>
            <person name="Plessy C."/>
            <person name="Shibata K."/>
            <person name="Shiraki T."/>
            <person name="Suzuki S."/>
            <person name="Tagami M."/>
            <person name="Waki K."/>
            <person name="Watahiki A."/>
            <person name="Okamura-Oho Y."/>
            <person name="Suzuki H."/>
            <person name="Kawai J."/>
            <person name="Hayashizaki Y."/>
        </authorList>
    </citation>
    <scope>NUCLEOTIDE SEQUENCE [LARGE SCALE MRNA]</scope>
    <source>
        <strain>C57BL/6J</strain>
        <tissue>Testis</tissue>
    </source>
</reference>
<reference key="2">
    <citation type="journal article" date="2004" name="Genome Res.">
        <title>The status, quality, and expansion of the NIH full-length cDNA project: the Mammalian Gene Collection (MGC).</title>
        <authorList>
            <consortium name="The MGC Project Team"/>
        </authorList>
    </citation>
    <scope>NUCLEOTIDE SEQUENCE [LARGE SCALE MRNA] OF 1-350</scope>
    <source>
        <tissue>Testis</tissue>
    </source>
</reference>
<reference key="3">
    <citation type="journal article" date="2005" name="Cell Cycle">
        <title>APOBEC4, a new member of the AID/APOBEC family of polynucleotide (deoxy)cytidine deaminases predicted by computational analysis.</title>
        <authorList>
            <person name="Rogozin I.B."/>
            <person name="Basu M.K."/>
            <person name="Jordan I.K."/>
            <person name="Pavlov Y.I."/>
            <person name="Koonin E.V."/>
        </authorList>
    </citation>
    <scope>IDENTIFICATION</scope>
    <scope>TISSUE SPECIFICITY</scope>
</reference>
<keyword id="KW-0378">Hydrolase</keyword>
<keyword id="KW-0479">Metal-binding</keyword>
<keyword id="KW-0507">mRNA processing</keyword>
<keyword id="KW-1185">Reference proteome</keyword>
<keyword id="KW-0862">Zinc</keyword>
<feature type="chain" id="PRO_0000239357" description="Putative C-&gt;U-editing enzyme APOBEC-4">
    <location>
        <begin position="1"/>
        <end position="374"/>
    </location>
</feature>
<feature type="domain" description="CMP/dCMP-type deaminase" evidence="2">
    <location>
        <begin position="60"/>
        <end position="176"/>
    </location>
</feature>
<feature type="region of interest" description="Disordered" evidence="3">
    <location>
        <begin position="259"/>
        <end position="280"/>
    </location>
</feature>
<feature type="active site" description="Proton donor" evidence="1">
    <location>
        <position position="94"/>
    </location>
</feature>
<feature type="binding site" evidence="1">
    <location>
        <position position="92"/>
    </location>
    <ligand>
        <name>Zn(2+)</name>
        <dbReference type="ChEBI" id="CHEBI:29105"/>
        <note>catalytic</note>
    </ligand>
</feature>
<feature type="binding site" evidence="1">
    <location>
        <position position="126"/>
    </location>
    <ligand>
        <name>Zn(2+)</name>
        <dbReference type="ChEBI" id="CHEBI:29105"/>
        <note>catalytic</note>
    </ligand>
</feature>
<feature type="binding site" evidence="1">
    <location>
        <position position="133"/>
    </location>
    <ligand>
        <name>Zn(2+)</name>
        <dbReference type="ChEBI" id="CHEBI:29105"/>
        <note>catalytic</note>
    </ligand>
</feature>
<dbReference type="EC" id="3.5.4.-"/>
<dbReference type="EMBL" id="AK017014">
    <property type="status" value="NOT_ANNOTATED_CDS"/>
    <property type="molecule type" value="mRNA"/>
</dbReference>
<dbReference type="EMBL" id="BC100465">
    <property type="protein sequence ID" value="AAI00466.1"/>
    <property type="status" value="ALT_SEQ"/>
    <property type="molecule type" value="mRNA"/>
</dbReference>
<dbReference type="CCDS" id="CCDS35738.1"/>
<dbReference type="RefSeq" id="NP_001074666.1">
    <property type="nucleotide sequence ID" value="NM_001081197.1"/>
</dbReference>
<dbReference type="FunCoup" id="Q497M3">
    <property type="interactions" value="2"/>
</dbReference>
<dbReference type="STRING" id="10090.ENSMUSP00000069723"/>
<dbReference type="PhosphoSitePlus" id="Q497M3"/>
<dbReference type="PaxDb" id="10090-ENSMUSP00000069723"/>
<dbReference type="ProteomicsDB" id="285905"/>
<dbReference type="Antibodypedia" id="2817">
    <property type="antibodies" value="261 antibodies from 28 providers"/>
</dbReference>
<dbReference type="Ensembl" id="ENSMUST00000068875.5">
    <property type="protein sequence ID" value="ENSMUSP00000069723.5"/>
    <property type="gene ID" value="ENSMUSG00000055547.5"/>
</dbReference>
<dbReference type="GeneID" id="71281"/>
<dbReference type="KEGG" id="mmu:71281"/>
<dbReference type="UCSC" id="uc007czi.1">
    <property type="organism name" value="mouse"/>
</dbReference>
<dbReference type="AGR" id="MGI:1918531"/>
<dbReference type="MGI" id="MGI:1918531">
    <property type="gene designation" value="Apobec4"/>
</dbReference>
<dbReference type="VEuPathDB" id="HostDB:ENSMUSG00000055547"/>
<dbReference type="eggNOG" id="ENOG502QQXT">
    <property type="taxonomic scope" value="Eukaryota"/>
</dbReference>
<dbReference type="GeneTree" id="ENSGT00390000014243"/>
<dbReference type="HOGENOM" id="CLU_832944_0_0_1"/>
<dbReference type="InParanoid" id="Q497M3"/>
<dbReference type="OMA" id="TPCEEPP"/>
<dbReference type="OrthoDB" id="9941981at2759"/>
<dbReference type="PhylomeDB" id="Q497M3"/>
<dbReference type="TreeFam" id="TF338173"/>
<dbReference type="Reactome" id="R-MMU-72200">
    <property type="pathway name" value="mRNA Editing: C to U Conversion"/>
</dbReference>
<dbReference type="Reactome" id="R-MMU-75094">
    <property type="pathway name" value="Formation of the Editosome"/>
</dbReference>
<dbReference type="PRO" id="PR:Q497M3"/>
<dbReference type="Proteomes" id="UP000000589">
    <property type="component" value="Chromosome 1"/>
</dbReference>
<dbReference type="RNAct" id="Q497M3">
    <property type="molecule type" value="protein"/>
</dbReference>
<dbReference type="Bgee" id="ENSMUSG00000055547">
    <property type="expression patterns" value="Expressed in seminiferous tubule of testis and 5 other cell types or tissues"/>
</dbReference>
<dbReference type="GO" id="GO:0016787">
    <property type="term" value="F:hydrolase activity"/>
    <property type="evidence" value="ECO:0007669"/>
    <property type="project" value="UniProtKB-KW"/>
</dbReference>
<dbReference type="GO" id="GO:0046872">
    <property type="term" value="F:metal ion binding"/>
    <property type="evidence" value="ECO:0007669"/>
    <property type="project" value="UniProtKB-KW"/>
</dbReference>
<dbReference type="GO" id="GO:0006397">
    <property type="term" value="P:mRNA processing"/>
    <property type="evidence" value="ECO:0007669"/>
    <property type="project" value="UniProtKB-KW"/>
</dbReference>
<dbReference type="Gene3D" id="3.40.140.10">
    <property type="entry name" value="Cytidine Deaminase, domain 2"/>
    <property type="match status" value="1"/>
</dbReference>
<dbReference type="InterPro" id="IPR038953">
    <property type="entry name" value="APOBEC4"/>
</dbReference>
<dbReference type="InterPro" id="IPR002125">
    <property type="entry name" value="CMP_dCMP_dom"/>
</dbReference>
<dbReference type="PANTHER" id="PTHR35672">
    <property type="entry name" value="C-U-EDITING ENZYME APOBEC-4-RELATED"/>
    <property type="match status" value="1"/>
</dbReference>
<dbReference type="PANTHER" id="PTHR35672:SF1">
    <property type="entry name" value="C-U-EDITING ENZYME APOBEC-4-RELATED"/>
    <property type="match status" value="1"/>
</dbReference>
<dbReference type="Pfam" id="PF18778">
    <property type="entry name" value="NAD1"/>
    <property type="match status" value="1"/>
</dbReference>
<dbReference type="PROSITE" id="PS51747">
    <property type="entry name" value="CYT_DCMP_DEAMINASES_2"/>
    <property type="match status" value="1"/>
</dbReference>
<organism>
    <name type="scientific">Mus musculus</name>
    <name type="common">Mouse</name>
    <dbReference type="NCBI Taxonomy" id="10090"/>
    <lineage>
        <taxon>Eukaryota</taxon>
        <taxon>Metazoa</taxon>
        <taxon>Chordata</taxon>
        <taxon>Craniata</taxon>
        <taxon>Vertebrata</taxon>
        <taxon>Euteleostomi</taxon>
        <taxon>Mammalia</taxon>
        <taxon>Eutheria</taxon>
        <taxon>Euarchontoglires</taxon>
        <taxon>Glires</taxon>
        <taxon>Rodentia</taxon>
        <taxon>Myomorpha</taxon>
        <taxon>Muroidea</taxon>
        <taxon>Muridae</taxon>
        <taxon>Murinae</taxon>
        <taxon>Mus</taxon>
        <taxon>Mus</taxon>
    </lineage>
</organism>
<evidence type="ECO:0000250" key="1"/>
<evidence type="ECO:0000255" key="2">
    <source>
        <dbReference type="PROSITE-ProRule" id="PRU01083"/>
    </source>
</evidence>
<evidence type="ECO:0000256" key="3">
    <source>
        <dbReference type="SAM" id="MobiDB-lite"/>
    </source>
</evidence>
<evidence type="ECO:0000269" key="4">
    <source>
    </source>
</evidence>
<evidence type="ECO:0000305" key="5"/>
<comment type="function">
    <text evidence="1">Putative C to U editing enzyme whose physiological substrate is not yet known.</text>
</comment>
<comment type="cofactor">
    <cofactor evidence="1">
        <name>Zn(2+)</name>
        <dbReference type="ChEBI" id="CHEBI:29105"/>
    </cofactor>
</comment>
<comment type="tissue specificity">
    <text evidence="4">Predominantly expressed in testis.</text>
</comment>
<comment type="similarity">
    <text evidence="5">Belongs to the cytidine and deoxycytidylate deaminase family.</text>
</comment>
<comment type="sequence caution" evidence="5">
    <conflict type="miscellaneous discrepancy">
        <sequence resource="EMBL-CDS" id="AAI00466"/>
    </conflict>
    <text>Contaminating sequence. Potential poly-A sequence.</text>
</comment>
<protein>
    <recommendedName>
        <fullName>Putative C-&gt;U-editing enzyme APOBEC-4</fullName>
        <ecNumber>3.5.4.-</ecNumber>
    </recommendedName>
    <alternativeName>
        <fullName>Apolipoprotein B mRNA-editing enzyme catalytic polypeptide-like 4</fullName>
    </alternativeName>
</protein>
<gene>
    <name type="primary">Apobec4</name>
</gene>
<sequence>MEPLYEEILTQGGTIVKPYYWLSLSLGCTNCPYHIRTGEEARVPYTEFHQTFGFPWSTYPQTKHLTFYELRSSSKNLIQKGLASNCTGSHNHPEAMLFEKNGYLDAVIFHNSNIRHIILYSNNSPCNEAKHCCISKMYNFLMNYPEVTLSVFFSQLYHTEKQFPTSAWNRKALQSLASLWPQVTLSPICGGLWHAILEKFVSNISGSTVPQPFIAGRILADRYNTYEINSIIAAKPYFTDGLLSRQKENQNREAWAAFEKHPLGSAAPAQRQPTRGQDPRTPAVLMLVSNRDLPPIHVGSTPQKPRTVVRHLNMLQLSSFKVKDVKKPPSGRPVEEVEVMKESARSQKANKKNRSQWKKQTLVIKPRICRLLER</sequence>
<name>ABEC4_MOUSE</name>
<proteinExistence type="evidence at transcript level"/>